<sequence length="283" mass="30806">MEERAVKLAVYGKGGIGKSTTSCNLSVALAKRGKKVLQIGCDPKHDSTFTLTGFLIPTIIDTLEAKGYHYEDIYPEDVIYRGYGGVDCVEAGGPPAGAGCGGYVVGETVKLLKELNAFDEYDVILFDVLGDVVCGGFAAPLNYADYCVIVTDNGFDALFAANRIAASVREKAKTRKLRLAGLIGNRTSKRDLIDQYVSAVPMPVLEVLPLVEDIRISRVKGKTLFEMAETDPSLEPVCQYYLNIADELLARPEGIVPRPAEDRELFALLSDFYKTPVREPALV</sequence>
<gene>
    <name evidence="1" type="primary">chlL</name>
    <name type="ordered locus">CYA_2382</name>
</gene>
<accession>Q2JS74</accession>
<organism>
    <name type="scientific">Synechococcus sp. (strain JA-3-3Ab)</name>
    <name type="common">Cyanobacteria bacterium Yellowstone A-Prime</name>
    <dbReference type="NCBI Taxonomy" id="321327"/>
    <lineage>
        <taxon>Bacteria</taxon>
        <taxon>Bacillati</taxon>
        <taxon>Cyanobacteriota</taxon>
        <taxon>Cyanophyceae</taxon>
        <taxon>Synechococcales</taxon>
        <taxon>Synechococcaceae</taxon>
        <taxon>Synechococcus</taxon>
    </lineage>
</organism>
<protein>
    <recommendedName>
        <fullName evidence="1">Light-independent protochlorophyllide reductase iron-sulfur ATP-binding protein</fullName>
        <shortName evidence="1">DPOR subunit L</shortName>
        <shortName evidence="1">LI-POR subunit L</shortName>
        <ecNumber evidence="1">1.3.7.7</ecNumber>
    </recommendedName>
</protein>
<feature type="chain" id="PRO_0000324079" description="Light-independent protochlorophyllide reductase iron-sulfur ATP-binding protein">
    <location>
        <begin position="1"/>
        <end position="283"/>
    </location>
</feature>
<feature type="binding site" evidence="1">
    <location>
        <begin position="15"/>
        <end position="20"/>
    </location>
    <ligand>
        <name>ATP</name>
        <dbReference type="ChEBI" id="CHEBI:30616"/>
    </ligand>
</feature>
<feature type="binding site" evidence="1">
    <location>
        <position position="19"/>
    </location>
    <ligand>
        <name>Mg(2+)</name>
        <dbReference type="ChEBI" id="CHEBI:18420"/>
    </ligand>
</feature>
<feature type="binding site" evidence="1">
    <location>
        <position position="44"/>
    </location>
    <ligand>
        <name>ATP</name>
        <dbReference type="ChEBI" id="CHEBI:30616"/>
    </ligand>
</feature>
<feature type="binding site" evidence="1">
    <location>
        <position position="100"/>
    </location>
    <ligand>
        <name>[4Fe-4S] cluster</name>
        <dbReference type="ChEBI" id="CHEBI:49883"/>
        <note>ligand shared between dimeric partners</note>
    </ligand>
</feature>
<feature type="binding site" evidence="1">
    <location>
        <position position="134"/>
    </location>
    <ligand>
        <name>[4Fe-4S] cluster</name>
        <dbReference type="ChEBI" id="CHEBI:49883"/>
        <note>ligand shared between dimeric partners</note>
    </ligand>
</feature>
<feature type="binding site" evidence="1">
    <location>
        <begin position="185"/>
        <end position="186"/>
    </location>
    <ligand>
        <name>ATP</name>
        <dbReference type="ChEBI" id="CHEBI:30616"/>
    </ligand>
</feature>
<name>CHLL_SYNJA</name>
<evidence type="ECO:0000255" key="1">
    <source>
        <dbReference type="HAMAP-Rule" id="MF_00355"/>
    </source>
</evidence>
<proteinExistence type="inferred from homology"/>
<comment type="function">
    <text evidence="1">Component of the dark-operative protochlorophyllide reductase (DPOR) that uses Mg-ATP and reduced ferredoxin to reduce ring D of protochlorophyllide (Pchlide) to form chlorophyllide a (Chlide). This reaction is light-independent. The L component serves as a unique electron donor to the NB-component of the complex, and binds Mg-ATP.</text>
</comment>
<comment type="catalytic activity">
    <reaction evidence="1">
        <text>chlorophyllide a + oxidized 2[4Fe-4S]-[ferredoxin] + 2 ADP + 2 phosphate = protochlorophyllide a + reduced 2[4Fe-4S]-[ferredoxin] + 2 ATP + 2 H2O</text>
        <dbReference type="Rhea" id="RHEA:28202"/>
        <dbReference type="Rhea" id="RHEA-COMP:10002"/>
        <dbReference type="Rhea" id="RHEA-COMP:10004"/>
        <dbReference type="ChEBI" id="CHEBI:15377"/>
        <dbReference type="ChEBI" id="CHEBI:30616"/>
        <dbReference type="ChEBI" id="CHEBI:33722"/>
        <dbReference type="ChEBI" id="CHEBI:33723"/>
        <dbReference type="ChEBI" id="CHEBI:43474"/>
        <dbReference type="ChEBI" id="CHEBI:83348"/>
        <dbReference type="ChEBI" id="CHEBI:83350"/>
        <dbReference type="ChEBI" id="CHEBI:456216"/>
        <dbReference type="EC" id="1.3.7.7"/>
    </reaction>
</comment>
<comment type="cofactor">
    <cofactor evidence="1">
        <name>[4Fe-4S] cluster</name>
        <dbReference type="ChEBI" id="CHEBI:49883"/>
    </cofactor>
    <text evidence="1">Binds 1 [4Fe-4S] cluster per dimer.</text>
</comment>
<comment type="pathway">
    <text evidence="1">Porphyrin-containing compound metabolism; chlorophyll biosynthesis (light-independent).</text>
</comment>
<comment type="subunit">
    <text evidence="1">Homodimer. Protochlorophyllide reductase is composed of three subunits; ChlL, ChlN and ChlB.</text>
</comment>
<comment type="similarity">
    <text evidence="1">Belongs to the NifH/BchL/ChlL family.</text>
</comment>
<dbReference type="EC" id="1.3.7.7" evidence="1"/>
<dbReference type="EMBL" id="CP000239">
    <property type="protein sequence ID" value="ABD00508.1"/>
    <property type="molecule type" value="Genomic_DNA"/>
</dbReference>
<dbReference type="SMR" id="Q2JS74"/>
<dbReference type="STRING" id="321327.CYA_2382"/>
<dbReference type="KEGG" id="cya:CYA_2382"/>
<dbReference type="eggNOG" id="COG1348">
    <property type="taxonomic scope" value="Bacteria"/>
</dbReference>
<dbReference type="HOGENOM" id="CLU_059373_2_0_3"/>
<dbReference type="UniPathway" id="UPA00670"/>
<dbReference type="Proteomes" id="UP000008818">
    <property type="component" value="Chromosome"/>
</dbReference>
<dbReference type="GO" id="GO:0051539">
    <property type="term" value="F:4 iron, 4 sulfur cluster binding"/>
    <property type="evidence" value="ECO:0007669"/>
    <property type="project" value="UniProtKB-UniRule"/>
</dbReference>
<dbReference type="GO" id="GO:0005524">
    <property type="term" value="F:ATP binding"/>
    <property type="evidence" value="ECO:0007669"/>
    <property type="project" value="UniProtKB-UniRule"/>
</dbReference>
<dbReference type="GO" id="GO:0046872">
    <property type="term" value="F:metal ion binding"/>
    <property type="evidence" value="ECO:0007669"/>
    <property type="project" value="UniProtKB-KW"/>
</dbReference>
<dbReference type="GO" id="GO:0016730">
    <property type="term" value="F:oxidoreductase activity, acting on iron-sulfur proteins as donors"/>
    <property type="evidence" value="ECO:0007669"/>
    <property type="project" value="InterPro"/>
</dbReference>
<dbReference type="GO" id="GO:0016636">
    <property type="term" value="F:oxidoreductase activity, acting on the CH-CH group of donors, iron-sulfur protein as acceptor"/>
    <property type="evidence" value="ECO:0007669"/>
    <property type="project" value="UniProtKB-UniRule"/>
</dbReference>
<dbReference type="GO" id="GO:0036068">
    <property type="term" value="P:light-independent chlorophyll biosynthetic process"/>
    <property type="evidence" value="ECO:0007669"/>
    <property type="project" value="UniProtKB-UniRule"/>
</dbReference>
<dbReference type="GO" id="GO:0019685">
    <property type="term" value="P:photosynthesis, dark reaction"/>
    <property type="evidence" value="ECO:0007669"/>
    <property type="project" value="InterPro"/>
</dbReference>
<dbReference type="CDD" id="cd02032">
    <property type="entry name" value="Bchl-like"/>
    <property type="match status" value="1"/>
</dbReference>
<dbReference type="Gene3D" id="3.40.50.300">
    <property type="entry name" value="P-loop containing nucleotide triphosphate hydrolases"/>
    <property type="match status" value="1"/>
</dbReference>
<dbReference type="HAMAP" id="MF_00355">
    <property type="entry name" value="ChlL_BchL"/>
    <property type="match status" value="1"/>
</dbReference>
<dbReference type="InterPro" id="IPR030655">
    <property type="entry name" value="NifH/chlL_CS"/>
</dbReference>
<dbReference type="InterPro" id="IPR000392">
    <property type="entry name" value="NifH/frxC"/>
</dbReference>
<dbReference type="InterPro" id="IPR027417">
    <property type="entry name" value="P-loop_NTPase"/>
</dbReference>
<dbReference type="InterPro" id="IPR005971">
    <property type="entry name" value="Protochlorophyllide_ATP-bd"/>
</dbReference>
<dbReference type="NCBIfam" id="TIGR01281">
    <property type="entry name" value="DPOR_bchL"/>
    <property type="match status" value="1"/>
</dbReference>
<dbReference type="PANTHER" id="PTHR42864">
    <property type="entry name" value="LIGHT-INDEPENDENT PROTOCHLOROPHYLLIDE REDUCTASE IRON-SULFUR ATP-BINDING PROTEIN"/>
    <property type="match status" value="1"/>
</dbReference>
<dbReference type="PANTHER" id="PTHR42864:SF2">
    <property type="entry name" value="LIGHT-INDEPENDENT PROTOCHLOROPHYLLIDE REDUCTASE IRON-SULFUR ATP-BINDING PROTEIN"/>
    <property type="match status" value="1"/>
</dbReference>
<dbReference type="Pfam" id="PF00142">
    <property type="entry name" value="Fer4_NifH"/>
    <property type="match status" value="1"/>
</dbReference>
<dbReference type="PIRSF" id="PIRSF000363">
    <property type="entry name" value="Nitrogenase_iron"/>
    <property type="match status" value="1"/>
</dbReference>
<dbReference type="PRINTS" id="PR00091">
    <property type="entry name" value="NITROGNASEII"/>
</dbReference>
<dbReference type="SUPFAM" id="SSF52540">
    <property type="entry name" value="P-loop containing nucleoside triphosphate hydrolases"/>
    <property type="match status" value="1"/>
</dbReference>
<dbReference type="PROSITE" id="PS00746">
    <property type="entry name" value="NIFH_FRXC_1"/>
    <property type="match status" value="1"/>
</dbReference>
<dbReference type="PROSITE" id="PS00692">
    <property type="entry name" value="NIFH_FRXC_2"/>
    <property type="match status" value="1"/>
</dbReference>
<dbReference type="PROSITE" id="PS51026">
    <property type="entry name" value="NIFH_FRXC_3"/>
    <property type="match status" value="1"/>
</dbReference>
<reference key="1">
    <citation type="journal article" date="2007" name="ISME J.">
        <title>Population level functional diversity in a microbial community revealed by comparative genomic and metagenomic analyses.</title>
        <authorList>
            <person name="Bhaya D."/>
            <person name="Grossman A.R."/>
            <person name="Steunou A.-S."/>
            <person name="Khuri N."/>
            <person name="Cohan F.M."/>
            <person name="Hamamura N."/>
            <person name="Melendrez M.C."/>
            <person name="Bateson M.M."/>
            <person name="Ward D.M."/>
            <person name="Heidelberg J.F."/>
        </authorList>
    </citation>
    <scope>NUCLEOTIDE SEQUENCE [LARGE SCALE GENOMIC DNA]</scope>
    <source>
        <strain>JA-3-3Ab</strain>
    </source>
</reference>
<keyword id="KW-0004">4Fe-4S</keyword>
<keyword id="KW-0067">ATP-binding</keyword>
<keyword id="KW-0149">Chlorophyll biosynthesis</keyword>
<keyword id="KW-0408">Iron</keyword>
<keyword id="KW-0411">Iron-sulfur</keyword>
<keyword id="KW-0460">Magnesium</keyword>
<keyword id="KW-0479">Metal-binding</keyword>
<keyword id="KW-0547">Nucleotide-binding</keyword>
<keyword id="KW-0560">Oxidoreductase</keyword>
<keyword id="KW-0602">Photosynthesis</keyword>